<comment type="subcellular location">
    <subcellularLocation>
        <location evidence="2">Cell membrane</location>
        <topology evidence="2">Multi-pass membrane protein</topology>
    </subcellularLocation>
</comment>
<comment type="similarity">
    <text evidence="2">Belongs to the virB3 family.</text>
</comment>
<feature type="chain" id="PRO_0000290173" description="Type IV secretion system protein virB3">
    <location>
        <begin position="1"/>
        <end position="116"/>
    </location>
</feature>
<feature type="transmembrane region" description="Helical" evidence="1">
    <location>
        <begin position="23"/>
        <end position="43"/>
    </location>
</feature>
<feature type="transmembrane region" description="Helical" evidence="1">
    <location>
        <begin position="45"/>
        <end position="65"/>
    </location>
</feature>
<keyword id="KW-1003">Cell membrane</keyword>
<keyword id="KW-0472">Membrane</keyword>
<keyword id="KW-0812">Transmembrane</keyword>
<keyword id="KW-1133">Transmembrane helix</keyword>
<keyword id="KW-0843">Virulence</keyword>
<gene>
    <name type="primary">virB3</name>
    <name type="ordered locus">BruAb2_0067</name>
</gene>
<accession>P0C526</accession>
<accession>Q57A16</accession>
<accession>Q7BMZ8</accession>
<organism>
    <name type="scientific">Brucella abortus biovar 1 (strain 9-941)</name>
    <dbReference type="NCBI Taxonomy" id="262698"/>
    <lineage>
        <taxon>Bacteria</taxon>
        <taxon>Pseudomonadati</taxon>
        <taxon>Pseudomonadota</taxon>
        <taxon>Alphaproteobacteria</taxon>
        <taxon>Hyphomicrobiales</taxon>
        <taxon>Brucellaceae</taxon>
        <taxon>Brucella/Ochrobactrum group</taxon>
        <taxon>Brucella</taxon>
    </lineage>
</organism>
<proteinExistence type="inferred from homology"/>
<name>VIRB3_BRUAB</name>
<sequence>MTTAPQESNARSAGYRGDPIFKGCTRPAMLFGVPVIPLVIVGGSIVLLSVWISMFILPLIVPIVLVMRQITQTDDQMFRLLGLKAQFRLIHFNRTGRFWRASAYSPIAFTKRKRES</sequence>
<dbReference type="EMBL" id="AE017224">
    <property type="protein sequence ID" value="AAX75518.1"/>
    <property type="molecule type" value="Genomic_DNA"/>
</dbReference>
<dbReference type="RefSeq" id="WP_002966512.1">
    <property type="nucleotide sequence ID" value="NC_006933.1"/>
</dbReference>
<dbReference type="SMR" id="P0C526"/>
<dbReference type="EnsemblBacteria" id="AAX75518">
    <property type="protein sequence ID" value="AAX75518"/>
    <property type="gene ID" value="BruAb2_0067"/>
</dbReference>
<dbReference type="KEGG" id="bmb:BruAb2_0067"/>
<dbReference type="HOGENOM" id="CLU_158477_0_0_5"/>
<dbReference type="PRO" id="PR:P0C526"/>
<dbReference type="Proteomes" id="UP000000540">
    <property type="component" value="Chromosome II"/>
</dbReference>
<dbReference type="GO" id="GO:0005886">
    <property type="term" value="C:plasma membrane"/>
    <property type="evidence" value="ECO:0007669"/>
    <property type="project" value="UniProtKB-SubCell"/>
</dbReference>
<dbReference type="InterPro" id="IPR007792">
    <property type="entry name" value="T4SS_VirB3/TrbD/AvhB"/>
</dbReference>
<dbReference type="Pfam" id="PF05101">
    <property type="entry name" value="VirB3"/>
    <property type="match status" value="1"/>
</dbReference>
<evidence type="ECO:0000255" key="1"/>
<evidence type="ECO:0000305" key="2"/>
<protein>
    <recommendedName>
        <fullName>Type IV secretion system protein virB3</fullName>
    </recommendedName>
</protein>
<reference key="1">
    <citation type="journal article" date="2005" name="J. Bacteriol.">
        <title>Completion of the genome sequence of Brucella abortus and comparison to the highly similar genomes of Brucella melitensis and Brucella suis.</title>
        <authorList>
            <person name="Halling S.M."/>
            <person name="Peterson-Burch B.D."/>
            <person name="Bricker B.J."/>
            <person name="Zuerner R.L."/>
            <person name="Qing Z."/>
            <person name="Li L.-L."/>
            <person name="Kapur V."/>
            <person name="Alt D.P."/>
            <person name="Olsen S.C."/>
        </authorList>
    </citation>
    <scope>NUCLEOTIDE SEQUENCE [LARGE SCALE GENOMIC DNA]</scope>
    <source>
        <strain>9-941</strain>
    </source>
</reference>